<name>GAG_FUJSV</name>
<feature type="chain" id="PRO_0000442128" description="Gag polyprotein">
    <location>
        <begin position="1"/>
        <end position="309"/>
    </location>
</feature>
<feature type="chain" id="PRO_0000040860" description="Matrix protein p19">
    <location>
        <begin position="1"/>
        <end position="151"/>
    </location>
</feature>
<feature type="chain" id="PRO_0000442129" description="p2A">
    <location>
        <begin position="152"/>
        <end position="162"/>
    </location>
</feature>
<feature type="chain" id="PRO_0000442130" description="p2B">
    <location>
        <begin position="163"/>
        <end position="173"/>
    </location>
</feature>
<feature type="chain" id="PRO_0000040861" description="p10">
    <location>
        <begin position="174"/>
        <end position="235"/>
    </location>
</feature>
<feature type="chain" id="PRO_0000040862" description="Capsid protein p27, truncated">
    <location>
        <begin position="236"/>
        <end position="309"/>
    </location>
</feature>
<feature type="region of interest" description="Disordered" evidence="2">
    <location>
        <begin position="127"/>
        <end position="146"/>
    </location>
</feature>
<feature type="region of interest" description="Disordered" evidence="2">
    <location>
        <begin position="177"/>
        <end position="213"/>
    </location>
</feature>
<feature type="short sequence motif" description="PPXY motif" evidence="1">
    <location>
        <begin position="168"/>
        <end position="171"/>
    </location>
</feature>
<feature type="compositionally biased region" description="Basic and acidic residues" evidence="2">
    <location>
        <begin position="127"/>
        <end position="137"/>
    </location>
</feature>
<feature type="site" description="Cleavage; by viral protease p15" evidence="1">
    <location>
        <begin position="151"/>
        <end position="152"/>
    </location>
</feature>
<feature type="site" description="Cleavage; by viral protease p15" evidence="1">
    <location>
        <begin position="162"/>
        <end position="163"/>
    </location>
</feature>
<feature type="site" description="Cleavage; by viral protease p15" evidence="1">
    <location>
        <begin position="173"/>
        <end position="174"/>
    </location>
</feature>
<feature type="site" description="Cleavage; by viral protease p15" evidence="1">
    <location>
        <begin position="235"/>
        <end position="236"/>
    </location>
</feature>
<protein>
    <recommendedName>
        <fullName>Gag polyprotein</fullName>
    </recommendedName>
    <component>
        <recommendedName>
            <fullName>Matrix protein p19</fullName>
        </recommendedName>
    </component>
    <component>
        <recommendedName>
            <fullName>p2A</fullName>
        </recommendedName>
    </component>
    <component>
        <recommendedName>
            <fullName>p2B</fullName>
        </recommendedName>
    </component>
    <component>
        <recommendedName>
            <fullName>p10</fullName>
        </recommendedName>
    </component>
    <component>
        <recommendedName>
            <fullName>Capsid protein p27, truncated</fullName>
        </recommendedName>
    </component>
</protein>
<gene>
    <name type="primary">gag</name>
</gene>
<keyword id="KW-0167">Capsid protein</keyword>
<keyword id="KW-0945">Host-virus interaction</keyword>
<keyword id="KW-1198">Viral budding</keyword>
<keyword id="KW-1187">Viral budding via the host ESCRT complexes</keyword>
<keyword id="KW-0468">Viral matrix protein</keyword>
<keyword id="KW-1188">Viral release from host cell</keyword>
<keyword id="KW-0946">Virion</keyword>
<accession>P03326</accession>
<accession>Q85558</accession>
<organism>
    <name type="scientific">Fujinami sarcoma virus</name>
    <name type="common">FSV</name>
    <dbReference type="NCBI Taxonomy" id="11885"/>
    <lineage>
        <taxon>Viruses</taxon>
        <taxon>Riboviria</taxon>
        <taxon>Pararnavirae</taxon>
        <taxon>Artverviricota</taxon>
        <taxon>Revtraviricetes</taxon>
        <taxon>Ortervirales</taxon>
        <taxon>Retroviridae</taxon>
        <taxon>Orthoretrovirinae</taxon>
        <taxon>Alpharetrovirus</taxon>
    </lineage>
</organism>
<comment type="subcellular location">
    <molecule>Matrix protein p19</molecule>
    <subcellularLocation>
        <location evidence="3">Virion</location>
    </subcellularLocation>
</comment>
<comment type="domain">
    <text evidence="3">Late-budding domains (L domains) are short sequence motifs essential for viral particle budding. They recruit proteins of the host ESCRT machinery (Endosomal Sorting Complex Required for Transport) or ESCRT-associated proteins. Gag-p19 contains one L domain: a PPXY motif which potentially interacts with the WW domain 3 of NEDD4 E3 ubiquitin ligase (Potential).</text>
</comment>
<comment type="PTM">
    <molecule>Gag polyprotein</molecule>
    <text evidence="1">Specific enzymatic cleavages in vivo yield mature proteins.</text>
</comment>
<comment type="miscellaneous">
    <molecule>Gag polyprotein</molecule>
    <text evidence="3">This protein is synthesized as a Gag-vFps polyprotein.</text>
</comment>
<dbReference type="EMBL" id="J02194">
    <property type="protein sequence ID" value="AAA42402.1"/>
    <property type="status" value="ALT_TERM"/>
    <property type="molecule type" value="Genomic_RNA"/>
</dbReference>
<dbReference type="PIR" id="A03926">
    <property type="entry name" value="FOFVF"/>
</dbReference>
<dbReference type="RefSeq" id="NP_056889.1">
    <property type="nucleotide sequence ID" value="NC_001403.1"/>
</dbReference>
<dbReference type="SMR" id="P03326"/>
<dbReference type="KEGG" id="vg:1491921"/>
<dbReference type="Proteomes" id="UP000124870">
    <property type="component" value="Genome"/>
</dbReference>
<dbReference type="GO" id="GO:0019028">
    <property type="term" value="C:viral capsid"/>
    <property type="evidence" value="ECO:0007669"/>
    <property type="project" value="UniProtKB-KW"/>
</dbReference>
<dbReference type="GO" id="GO:0039660">
    <property type="term" value="F:structural constituent of virion"/>
    <property type="evidence" value="ECO:0007669"/>
    <property type="project" value="UniProtKB-KW"/>
</dbReference>
<dbReference type="GO" id="GO:0039702">
    <property type="term" value="P:viral budding via host ESCRT complex"/>
    <property type="evidence" value="ECO:0007669"/>
    <property type="project" value="UniProtKB-KW"/>
</dbReference>
<dbReference type="Gene3D" id="1.10.375.10">
    <property type="entry name" value="Human Immunodeficiency Virus Type 1 Capsid Protein"/>
    <property type="match status" value="1"/>
</dbReference>
<dbReference type="Gene3D" id="1.10.150.90">
    <property type="entry name" value="Immunodeficiency lentiviruses, gag gene matrix protein p17"/>
    <property type="match status" value="1"/>
</dbReference>
<dbReference type="InterPro" id="IPR004028">
    <property type="entry name" value="Gag_M"/>
</dbReference>
<dbReference type="InterPro" id="IPR012344">
    <property type="entry name" value="Matrix_HIV/RSV_N"/>
</dbReference>
<dbReference type="InterPro" id="IPR050195">
    <property type="entry name" value="Primate_lentivir_Gag_pol-like"/>
</dbReference>
<dbReference type="InterPro" id="IPR008919">
    <property type="entry name" value="Retrov_capsid_N"/>
</dbReference>
<dbReference type="InterPro" id="IPR010999">
    <property type="entry name" value="Retrovr_matrix"/>
</dbReference>
<dbReference type="PANTHER" id="PTHR40389">
    <property type="entry name" value="ENDOGENOUS RETROVIRUS GROUP K MEMBER 24 GAG POLYPROTEIN-RELATED"/>
    <property type="match status" value="1"/>
</dbReference>
<dbReference type="PANTHER" id="PTHR40389:SF3">
    <property type="entry name" value="IGE-BINDING PROTEIN"/>
    <property type="match status" value="1"/>
</dbReference>
<dbReference type="Pfam" id="PF00607">
    <property type="entry name" value="Gag_p24"/>
    <property type="match status" value="1"/>
</dbReference>
<dbReference type="Pfam" id="PF02813">
    <property type="entry name" value="Retro_M"/>
    <property type="match status" value="1"/>
</dbReference>
<dbReference type="SUPFAM" id="SSF47836">
    <property type="entry name" value="Retroviral matrix proteins"/>
    <property type="match status" value="1"/>
</dbReference>
<dbReference type="SUPFAM" id="SSF47943">
    <property type="entry name" value="Retrovirus capsid protein, N-terminal core domain"/>
    <property type="match status" value="1"/>
</dbReference>
<sequence>MEAVIKVISSACKTYCGKTSPSKKEIGAMLSQLQKEGLLMSLSDLYSPGSWDPITAALTQRAMVLGKSGELKTWGLVLGALKAAREEQVTSEQAKFWLGLGGGRVSPPGPECIEKPATERRIDKGETTVQRDTKMAPEETATPKTVGTSCYHCGTAIGCNCATASAPPPPYVGSGLYPSLAGVGEQQGQGGDTPRGAEQPRAEPGRTGLAPGPALTDWARIREELASTGPPMVAMPVVIKTEGPAWTPLEPKLIAGLAGAVGAGGLRSPIAVAGVEALMSSPLLPHDVTNPMRVILGPAPHALWMDAWA</sequence>
<reference key="1">
    <citation type="journal article" date="1982" name="Cell">
        <title>Nucleotide sequence of Fujinami sarcoma virus: evolutionary relationship of its transforming gene with transforming genes of other sarcoma viruses.</title>
        <authorList>
            <person name="Shibuya M."/>
            <person name="Hanafusa H."/>
        </authorList>
    </citation>
    <scope>NUCLEOTIDE SEQUENCE [GENOMIC RNA]</scope>
</reference>
<evidence type="ECO:0000250" key="1">
    <source>
        <dbReference type="UniProtKB" id="P03322"/>
    </source>
</evidence>
<evidence type="ECO:0000256" key="2">
    <source>
        <dbReference type="SAM" id="MobiDB-lite"/>
    </source>
</evidence>
<evidence type="ECO:0000305" key="3"/>
<proteinExistence type="inferred from homology"/>
<organismHost>
    <name type="scientific">Gallus gallus</name>
    <name type="common">Chicken</name>
    <dbReference type="NCBI Taxonomy" id="9031"/>
</organismHost>